<evidence type="ECO:0000250" key="1"/>
<evidence type="ECO:0000256" key="2">
    <source>
        <dbReference type="SAM" id="MobiDB-lite"/>
    </source>
</evidence>
<evidence type="ECO:0000305" key="3"/>
<feature type="chain" id="PRO_0000073949" description="DNA-directed RNA polymerase III subunit RPC1">
    <location>
        <begin position="1"/>
        <end position="2339"/>
    </location>
</feature>
<feature type="region of interest" description="Bridging helix" evidence="1">
    <location>
        <begin position="955"/>
        <end position="967"/>
    </location>
</feature>
<feature type="region of interest" description="Disordered" evidence="2">
    <location>
        <begin position="1503"/>
        <end position="1557"/>
    </location>
</feature>
<feature type="region of interest" description="Disordered" evidence="2">
    <location>
        <begin position="2038"/>
        <end position="2079"/>
    </location>
</feature>
<feature type="compositionally biased region" description="Basic and acidic residues" evidence="2">
    <location>
        <begin position="1509"/>
        <end position="1520"/>
    </location>
</feature>
<feature type="compositionally biased region" description="Low complexity" evidence="2">
    <location>
        <begin position="1521"/>
        <end position="1557"/>
    </location>
</feature>
<feature type="compositionally biased region" description="Basic and acidic residues" evidence="2">
    <location>
        <begin position="2038"/>
        <end position="2047"/>
    </location>
</feature>
<feature type="compositionally biased region" description="Low complexity" evidence="2">
    <location>
        <begin position="2049"/>
        <end position="2059"/>
    </location>
</feature>
<feature type="binding site" evidence="1">
    <location>
        <position position="88"/>
    </location>
    <ligand>
        <name>Zn(2+)</name>
        <dbReference type="ChEBI" id="CHEBI:29105"/>
        <label>1</label>
    </ligand>
</feature>
<feature type="binding site" evidence="1">
    <location>
        <position position="91"/>
    </location>
    <ligand>
        <name>Zn(2+)</name>
        <dbReference type="ChEBI" id="CHEBI:29105"/>
        <label>1</label>
    </ligand>
</feature>
<feature type="binding site" evidence="1">
    <location>
        <position position="98"/>
    </location>
    <ligand>
        <name>Zn(2+)</name>
        <dbReference type="ChEBI" id="CHEBI:29105"/>
        <label>1</label>
    </ligand>
</feature>
<feature type="binding site" evidence="1">
    <location>
        <position position="101"/>
    </location>
    <ligand>
        <name>Zn(2+)</name>
        <dbReference type="ChEBI" id="CHEBI:29105"/>
        <label>1</label>
    </ligand>
</feature>
<feature type="binding site" evidence="1">
    <location>
        <position position="128"/>
    </location>
    <ligand>
        <name>Zn(2+)</name>
        <dbReference type="ChEBI" id="CHEBI:29105"/>
        <label>2</label>
    </ligand>
</feature>
<feature type="binding site" evidence="1">
    <location>
        <position position="131"/>
    </location>
    <ligand>
        <name>Zn(2+)</name>
        <dbReference type="ChEBI" id="CHEBI:29105"/>
        <label>2</label>
    </ligand>
</feature>
<feature type="binding site" evidence="1">
    <location>
        <position position="175"/>
    </location>
    <ligand>
        <name>Zn(2+)</name>
        <dbReference type="ChEBI" id="CHEBI:29105"/>
        <label>2</label>
    </ligand>
</feature>
<feature type="binding site" evidence="1">
    <location>
        <position position="611"/>
    </location>
    <ligand>
        <name>Mg(2+)</name>
        <dbReference type="ChEBI" id="CHEBI:18420"/>
        <note>catalytic</note>
    </ligand>
</feature>
<feature type="binding site" evidence="1">
    <location>
        <position position="613"/>
    </location>
    <ligand>
        <name>Mg(2+)</name>
        <dbReference type="ChEBI" id="CHEBI:18420"/>
        <note>catalytic</note>
    </ligand>
</feature>
<feature type="binding site" evidence="1">
    <location>
        <position position="615"/>
    </location>
    <ligand>
        <name>Mg(2+)</name>
        <dbReference type="ChEBI" id="CHEBI:18420"/>
        <note>catalytic</note>
    </ligand>
</feature>
<comment type="function">
    <text evidence="1">DNA-dependent RNA polymerase catalyzes the transcription of DNA into RNA using the four ribonucleoside triphosphates as substrates. Largest and catalytic core component of RNA polymerase III which synthesizes small RNAs, such as 5S rRNA and tRNAs. Forms the polymerase active center together with the second largest subunit. A single-stranded DNA template strand of the promoter is positioned within the central active site cleft of Pol III. A bridging helix emanates from RPC1 and crosses the cleft near the catalytic site and is thought to promote translocation of Pol III by acting as a ratchet that moves the RNA-DNA hybrid through the active site by switching from straight to bent conformations at each step of nucleotide addition (By similarity).</text>
</comment>
<comment type="catalytic activity">
    <reaction>
        <text>RNA(n) + a ribonucleoside 5'-triphosphate = RNA(n+1) + diphosphate</text>
        <dbReference type="Rhea" id="RHEA:21248"/>
        <dbReference type="Rhea" id="RHEA-COMP:14527"/>
        <dbReference type="Rhea" id="RHEA-COMP:17342"/>
        <dbReference type="ChEBI" id="CHEBI:33019"/>
        <dbReference type="ChEBI" id="CHEBI:61557"/>
        <dbReference type="ChEBI" id="CHEBI:140395"/>
        <dbReference type="EC" id="2.7.7.6"/>
    </reaction>
</comment>
<comment type="subunit">
    <text evidence="1">Component of the RNA polymerase III (Pol III) complex consisting of 17 subunits.</text>
</comment>
<comment type="subcellular location">
    <subcellularLocation>
        <location evidence="1">Nucleus</location>
    </subcellularLocation>
</comment>
<comment type="similarity">
    <text evidence="3">Belongs to the RNA polymerase beta' chain family.</text>
</comment>
<protein>
    <recommendedName>
        <fullName>DNA-directed RNA polymerase III subunit RPC1</fullName>
        <shortName>RNA polymerase III subunit C1</shortName>
        <ecNumber>2.7.7.6</ecNumber>
    </recommendedName>
    <alternativeName>
        <fullName>DNA-directed RNA polymerase III largest subunit</fullName>
    </alternativeName>
    <alternativeName>
        <fullName>RNA polymerase III subunit C160</fullName>
    </alternativeName>
</protein>
<accession>P27625</accession>
<reference key="1">
    <citation type="journal article" date="1991" name="Mol. Biochem. Parasitol.">
        <title>Characterization of the gene encoding the largest subunit of Plasmodium falciparum RNA polymerase III.</title>
        <authorList>
            <person name="Li W.B."/>
            <person name="Bzik D.J."/>
            <person name="Tanaka M."/>
            <person name="Gu H."/>
            <person name="Fox B.A."/>
            <person name="Inselburg J."/>
        </authorList>
    </citation>
    <scope>NUCLEOTIDE SEQUENCE [GENOMIC DNA]</scope>
</reference>
<name>RPC1_PLAFA</name>
<sequence>MMKKKNIDIEELKRLIEESSMKKRFVKDIKRNCEIKSIRFGIMSKEDIIKYSEVKIMNREMYKNNSGIPYPYGVLDLKLGAHKSNSVCETCNKKLINCSGHFGYIELNYPVFHIGYYKYIIHILYCICKYCSSLLLSKEKIDFYCNLKKKSTDDSFYKKHLFKRILNNCKKVNKCYICGNPQGVIKKIIKPSLDQFMKLKHILKVKENGKMIIKEEDLNSLYVLKLFKNINPYHVKLLNIENPEKLIITALLVPPNTIRPSVIIDEHGTAEDDLTCILSEITQLNNTIYNQCTNGYQTNQFLGNVEFLQLQITRFINSDSPAVSQLLATQNISKPGRGICQRLKGKEGRFRCNLSGKRVDFSSRTVISPDPNISIDEVVIPKIIAMRLTYPETVNKYNIDKLKMLIKNGCNKWPGANYIIKKSKKGTDPYSDISTSYNNNSNNISSIGCSNIFNVVNNYINNNCKNVRYNIKDVNNNVLLKDMCDINNMNNDINNNINNIYKNTSETNLCNVNNHNNNNNIYCNNQTQDNEEERKNSQFNKISLKYANKNHVIQNLNIGDVVERHICDGDIVLFNRQPSLHRMSIMCHKAKIMDFKTFRFNECVCSPYNADFDGDEMNLDVPQTEEARAEALYLMNVKHNLITPKNGEVIIALTQDFLSASYIITNKDTFLDRDTFCLLCSYFSDASLYIELPIPAILKPKELWTGKQLISVLIKPNKKENTIINFEIQEREYSNKFGDLKHLCLNDSYVCFYKSELICGSLGKKVLGSSKYGLFYYLIHHNSSHIALKIMNRLSKLTSRYFSNKGMTIGIDDVRPSQTLTEKKKDLLLKGYEKVNNEIILYNEKKMQIQPGCTLEETLEIKVKSILDDLRNDAGKTCNQYLHYLNKPLIMFNSGAKGALINIAQMIACVGQQNVAGQRIQNGFINRTLPHFHFHCKDSESRGFVQNSFYTGLSPTEFFFHTMSGREGLVDTAVKTAETGYMQRRLMKALEDLSIHYDYSVRSCDKQIVQFIYGDDALNPSYIDNNNTYLDQFDKVFDHIVSISSSHLLLSYKNKIPYLPHVQHQNKTSNMNNIYNNMNNINNNDSNRSIIYNNDSNMNNINNNDSNMNSIHNNNSNMNNIHNNDSNRSIIHNNDSNMNSIHNNDSNMNSIHNNNSNMNNIHNNDSNRSIIHNNDSNMNSIHNNDSNNNNNYKDCTHNPYICNESLIIRNIMNRLIYQNIAQEDLFIPLEHDEFLVNKIMESYTDQECNYEDIIRSLDLNKNVSYIHNDQGKHLSLQMCAEEHITINNTNNDNTYVEQIEMKELSKNKTKEKQSFKGTIRDMHEDSEEQMNKFITKKAKFFIEKKKGKMHECNDDIEYNNTQYDNIQYNNISCNYIKSQNLENTHHQVNNDLSFIKNNVILPPKEYHSIFHFVNDYRNVVEIKNLMDKKKIFLNNSEKNVVQSKYNRMSKNLKKKIEIINNIYRNEKKKLNRWKTKMDNDDNYWSSDDDSIIAKKIIKIKNKEKRKYHPKEEKENFDRNNYKMITDNNNNDNNNNNNDNNNNDNNNNNNNSNNNNYYYNLHDDVNNLGVTNYNTNIYPNDCNGIYEKETNNNELTTNSNMCDKNNDFSDEFFNNINENDLLYDNKYYRQIFKNVIGFVSVFEYVESYKQHYILFPYEIIKWTSFLLEYLTEIIPTNIFLHTKLSKKEKPTHQKNTGKMKIYIEEIKKWLFIKAINIYKYFSFKKSIELIKKKDYFNYIIKNYDISHRYIIHDYSFINLKQLYLFIFFNIYKYFKYISTPGDAVGSISAQSIGEPGTQMTLKTFHFAGVASMNVTLGVPRIKEIINASNSIQTPILNIPLEVNDNYNFALMMKSKLEKTTIRDICMYIKEDYTSRGVFLSVKFNEELIQKLFLNINAYNIKDIILKQSHINKIKINKIHINVINKYKLHISLKNDEFIFFQMESLKKGLLDLLIYGDKDIKRCIIKKEDIEVTDNEDEICDDMDEYYNVSQGTELYERKCNSKEENKNAIRVKKEEIDDNLEKEENIIYVSEKDSVNQLKSEKKKDINDDNNNNDDNNNNNDDDNKINDTIFNDDIDSDRNNLKENGSKLENVGEHIIERLSYKMKEKNVKKEHIKKEPNLINLDTINLDTLNFDEINVHNINNEKIEFYDEHLNICQGNKKHIQKKKKKKTVYSILVEGNSLNYVLGLEGVDFKHIISNHVINVFQVLGIEAARITIINEIKKCVEAYSIDIDIRHIMLLADIMAFTGDILGINRFGIQKARQSTLMLASFEETNEHLFVSSFFKNVDEINNISESIIVGKNIPIGTGAFQLLYDYKLEKETKNLTLLEKAERETAMNY</sequence>
<keyword id="KW-0240">DNA-directed RNA polymerase</keyword>
<keyword id="KW-0460">Magnesium</keyword>
<keyword id="KW-0479">Metal-binding</keyword>
<keyword id="KW-0548">Nucleotidyltransferase</keyword>
<keyword id="KW-0539">Nucleus</keyword>
<keyword id="KW-0804">Transcription</keyword>
<keyword id="KW-0808">Transferase</keyword>
<keyword id="KW-0862">Zinc</keyword>
<dbReference type="EC" id="2.7.7.6"/>
<dbReference type="EMBL" id="M73770">
    <property type="protein sequence ID" value="AAA29729.1"/>
    <property type="molecule type" value="Genomic_DNA"/>
</dbReference>
<dbReference type="PIR" id="A45597">
    <property type="entry name" value="A45597"/>
</dbReference>
<dbReference type="SMR" id="P27625"/>
<dbReference type="VEuPathDB" id="PlasmoDB:PF3D7_1329000"/>
<dbReference type="VEuPathDB" id="PlasmoDB:Pf7G8-2_000432100"/>
<dbReference type="VEuPathDB" id="PlasmoDB:Pf7G8_130033500"/>
<dbReference type="VEuPathDB" id="PlasmoDB:PfCD01_030023700"/>
<dbReference type="VEuPathDB" id="PlasmoDB:PfDd2_130034900"/>
<dbReference type="VEuPathDB" id="PlasmoDB:PfGA01_130035200"/>
<dbReference type="VEuPathDB" id="PlasmoDB:PfGB4_130035000"/>
<dbReference type="VEuPathDB" id="PlasmoDB:PfGN01_130035800"/>
<dbReference type="VEuPathDB" id="PlasmoDB:PfHB3_130035400"/>
<dbReference type="VEuPathDB" id="PlasmoDB:PfIT_130034300"/>
<dbReference type="VEuPathDB" id="PlasmoDB:PfKE01_130034700"/>
<dbReference type="VEuPathDB" id="PlasmoDB:PfKH01_130033300"/>
<dbReference type="VEuPathDB" id="PlasmoDB:PfKH02_130032000"/>
<dbReference type="VEuPathDB" id="PlasmoDB:PfML01_130032900"/>
<dbReference type="VEuPathDB" id="PlasmoDB:PfNF135_130033900"/>
<dbReference type="VEuPathDB" id="PlasmoDB:PfNF166_130034600"/>
<dbReference type="VEuPathDB" id="PlasmoDB:PfNF54_030023200"/>
<dbReference type="VEuPathDB" id="PlasmoDB:PfSD01_130035800"/>
<dbReference type="VEuPathDB" id="PlasmoDB:PfSN01_130032100"/>
<dbReference type="VEuPathDB" id="PlasmoDB:PfTG01_130034800"/>
<dbReference type="GO" id="GO:0000428">
    <property type="term" value="C:DNA-directed RNA polymerase complex"/>
    <property type="evidence" value="ECO:0007669"/>
    <property type="project" value="UniProtKB-KW"/>
</dbReference>
<dbReference type="GO" id="GO:0005739">
    <property type="term" value="C:mitochondrion"/>
    <property type="evidence" value="ECO:0007669"/>
    <property type="project" value="GOC"/>
</dbReference>
<dbReference type="GO" id="GO:0005634">
    <property type="term" value="C:nucleus"/>
    <property type="evidence" value="ECO:0007669"/>
    <property type="project" value="UniProtKB-SubCell"/>
</dbReference>
<dbReference type="GO" id="GO:0009536">
    <property type="term" value="C:plastid"/>
    <property type="evidence" value="ECO:0007669"/>
    <property type="project" value="GOC"/>
</dbReference>
<dbReference type="GO" id="GO:0003677">
    <property type="term" value="F:DNA binding"/>
    <property type="evidence" value="ECO:0007669"/>
    <property type="project" value="InterPro"/>
</dbReference>
<dbReference type="GO" id="GO:0003899">
    <property type="term" value="F:DNA-directed RNA polymerase activity"/>
    <property type="evidence" value="ECO:0007669"/>
    <property type="project" value="UniProtKB-EC"/>
</dbReference>
<dbReference type="GO" id="GO:0046872">
    <property type="term" value="F:metal ion binding"/>
    <property type="evidence" value="ECO:0007669"/>
    <property type="project" value="UniProtKB-KW"/>
</dbReference>
<dbReference type="GO" id="GO:0006351">
    <property type="term" value="P:DNA-templated transcription"/>
    <property type="evidence" value="ECO:0007669"/>
    <property type="project" value="InterPro"/>
</dbReference>
<dbReference type="CDD" id="cd02583">
    <property type="entry name" value="RNAP_III_RPC1_N"/>
    <property type="match status" value="1"/>
</dbReference>
<dbReference type="FunFam" id="2.40.40.20:FF:000019">
    <property type="entry name" value="DNA-directed RNA polymerase II subunit RPB1"/>
    <property type="match status" value="1"/>
</dbReference>
<dbReference type="FunFam" id="1.10.274.100:FF:000008">
    <property type="entry name" value="DNA-directed RNA polymerase subunit"/>
    <property type="match status" value="1"/>
</dbReference>
<dbReference type="FunFam" id="2.40.40.20:FF:000018">
    <property type="entry name" value="DNA-directed RNA polymerase subunit"/>
    <property type="match status" value="1"/>
</dbReference>
<dbReference type="FunFam" id="4.10.860.120:FF:000011">
    <property type="entry name" value="DNA-directed RNA polymerase subunit"/>
    <property type="match status" value="1"/>
</dbReference>
<dbReference type="Gene3D" id="1.10.132.30">
    <property type="match status" value="1"/>
</dbReference>
<dbReference type="Gene3D" id="1.10.150.390">
    <property type="match status" value="1"/>
</dbReference>
<dbReference type="Gene3D" id="2.40.40.20">
    <property type="match status" value="2"/>
</dbReference>
<dbReference type="Gene3D" id="6.10.250.2940">
    <property type="match status" value="1"/>
</dbReference>
<dbReference type="Gene3D" id="6.20.50.80">
    <property type="match status" value="1"/>
</dbReference>
<dbReference type="Gene3D" id="3.30.1490.180">
    <property type="entry name" value="RNA polymerase ii"/>
    <property type="match status" value="2"/>
</dbReference>
<dbReference type="Gene3D" id="4.10.860.120">
    <property type="entry name" value="RNA polymerase II, clamp domain"/>
    <property type="match status" value="1"/>
</dbReference>
<dbReference type="Gene3D" id="1.10.274.100">
    <property type="entry name" value="RNA polymerase Rpb1, domain 3"/>
    <property type="match status" value="1"/>
</dbReference>
<dbReference type="InterPro" id="IPR000722">
    <property type="entry name" value="RNA_pol_asu"/>
</dbReference>
<dbReference type="InterPro" id="IPR006592">
    <property type="entry name" value="RNA_pol_N"/>
</dbReference>
<dbReference type="InterPro" id="IPR007080">
    <property type="entry name" value="RNA_pol_Rpb1_1"/>
</dbReference>
<dbReference type="InterPro" id="IPR007066">
    <property type="entry name" value="RNA_pol_Rpb1_3"/>
</dbReference>
<dbReference type="InterPro" id="IPR042102">
    <property type="entry name" value="RNA_pol_Rpb1_3_sf"/>
</dbReference>
<dbReference type="InterPro" id="IPR007083">
    <property type="entry name" value="RNA_pol_Rpb1_4"/>
</dbReference>
<dbReference type="InterPro" id="IPR007081">
    <property type="entry name" value="RNA_pol_Rpb1_5"/>
</dbReference>
<dbReference type="InterPro" id="IPR044893">
    <property type="entry name" value="RNA_pol_Rpb1_clamp_domain"/>
</dbReference>
<dbReference type="InterPro" id="IPR035697">
    <property type="entry name" value="RNAP_III_RPC1_N"/>
</dbReference>
<dbReference type="InterPro" id="IPR038120">
    <property type="entry name" value="Rpb1_funnel_sf"/>
</dbReference>
<dbReference type="InterPro" id="IPR015700">
    <property type="entry name" value="RPC1"/>
</dbReference>
<dbReference type="PANTHER" id="PTHR48446">
    <property type="entry name" value="DNA-DIRECTED RNA POLYMERASE SUBUNIT BETA' N-TERMINAL SECTION"/>
    <property type="match status" value="1"/>
</dbReference>
<dbReference type="PANTHER" id="PTHR48446:SF1">
    <property type="entry name" value="DNA-DIRECTED RNA POLYMERASE SUBUNIT BETA' N-TERMINAL SECTION"/>
    <property type="match status" value="1"/>
</dbReference>
<dbReference type="Pfam" id="PF04997">
    <property type="entry name" value="RNA_pol_Rpb1_1"/>
    <property type="match status" value="1"/>
</dbReference>
<dbReference type="Pfam" id="PF00623">
    <property type="entry name" value="RNA_pol_Rpb1_2"/>
    <property type="match status" value="2"/>
</dbReference>
<dbReference type="Pfam" id="PF04983">
    <property type="entry name" value="RNA_pol_Rpb1_3"/>
    <property type="match status" value="1"/>
</dbReference>
<dbReference type="Pfam" id="PF05000">
    <property type="entry name" value="RNA_pol_Rpb1_4"/>
    <property type="match status" value="1"/>
</dbReference>
<dbReference type="Pfam" id="PF04998">
    <property type="entry name" value="RNA_pol_Rpb1_5"/>
    <property type="match status" value="1"/>
</dbReference>
<dbReference type="SMART" id="SM00663">
    <property type="entry name" value="RPOLA_N"/>
    <property type="match status" value="1"/>
</dbReference>
<dbReference type="SUPFAM" id="SSF64484">
    <property type="entry name" value="beta and beta-prime subunits of DNA dependent RNA-polymerase"/>
    <property type="match status" value="2"/>
</dbReference>
<proteinExistence type="inferred from homology"/>
<organism>
    <name type="scientific">Plasmodium falciparum</name>
    <dbReference type="NCBI Taxonomy" id="5833"/>
    <lineage>
        <taxon>Eukaryota</taxon>
        <taxon>Sar</taxon>
        <taxon>Alveolata</taxon>
        <taxon>Apicomplexa</taxon>
        <taxon>Aconoidasida</taxon>
        <taxon>Haemosporida</taxon>
        <taxon>Plasmodiidae</taxon>
        <taxon>Plasmodium</taxon>
        <taxon>Plasmodium (Laverania)</taxon>
    </lineage>
</organism>